<protein>
    <recommendedName>
        <fullName evidence="1">Xanthine phosphoribosyltransferase</fullName>
        <shortName evidence="1">XPRTase</shortName>
        <ecNumber evidence="1">2.4.2.22</ecNumber>
    </recommendedName>
</protein>
<proteinExistence type="inferred from homology"/>
<comment type="function">
    <text evidence="1">Converts the preformed base xanthine, a product of nucleic acid breakdown, to xanthosine 5'-monophosphate (XMP), so it can be reused for RNA or DNA synthesis.</text>
</comment>
<comment type="catalytic activity">
    <reaction evidence="1">
        <text>XMP + diphosphate = xanthine + 5-phospho-alpha-D-ribose 1-diphosphate</text>
        <dbReference type="Rhea" id="RHEA:10800"/>
        <dbReference type="ChEBI" id="CHEBI:17712"/>
        <dbReference type="ChEBI" id="CHEBI:33019"/>
        <dbReference type="ChEBI" id="CHEBI:57464"/>
        <dbReference type="ChEBI" id="CHEBI:58017"/>
        <dbReference type="EC" id="2.4.2.22"/>
    </reaction>
</comment>
<comment type="pathway">
    <text evidence="1">Purine metabolism; XMP biosynthesis via salvage pathway; XMP from xanthine: step 1/1.</text>
</comment>
<comment type="subunit">
    <text evidence="1">Homodimer.</text>
</comment>
<comment type="subcellular location">
    <subcellularLocation>
        <location evidence="1">Cytoplasm</location>
    </subcellularLocation>
</comment>
<comment type="similarity">
    <text evidence="1">Belongs to the purine/pyrimidine phosphoribosyltransferase family. Xpt subfamily.</text>
</comment>
<reference key="1">
    <citation type="journal article" date="2005" name="Proc. Natl. Acad. Sci. U.S.A.">
        <title>Whole genome sequence of Staphylococcus saprophyticus reveals the pathogenesis of uncomplicated urinary tract infection.</title>
        <authorList>
            <person name="Kuroda M."/>
            <person name="Yamashita A."/>
            <person name="Hirakawa H."/>
            <person name="Kumano M."/>
            <person name="Morikawa K."/>
            <person name="Higashide M."/>
            <person name="Maruyama A."/>
            <person name="Inose Y."/>
            <person name="Matoba K."/>
            <person name="Toh H."/>
            <person name="Kuhara S."/>
            <person name="Hattori M."/>
            <person name="Ohta T."/>
        </authorList>
    </citation>
    <scope>NUCLEOTIDE SEQUENCE [LARGE SCALE GENOMIC DNA]</scope>
    <source>
        <strain>ATCC 15305 / DSM 20229 / NCIMB 8711 / NCTC 7292 / S-41</strain>
    </source>
</reference>
<dbReference type="EC" id="2.4.2.22" evidence="1"/>
<dbReference type="EMBL" id="AP008934">
    <property type="protein sequence ID" value="BAE19470.1"/>
    <property type="molecule type" value="Genomic_DNA"/>
</dbReference>
<dbReference type="RefSeq" id="WP_002484266.1">
    <property type="nucleotide sequence ID" value="NZ_MTGA01000035.1"/>
</dbReference>
<dbReference type="SMR" id="Q49UU6"/>
<dbReference type="GeneID" id="3616571"/>
<dbReference type="KEGG" id="ssp:SSP2325"/>
<dbReference type="eggNOG" id="COG0503">
    <property type="taxonomic scope" value="Bacteria"/>
</dbReference>
<dbReference type="HOGENOM" id="CLU_099015_0_0_9"/>
<dbReference type="OrthoDB" id="9790678at2"/>
<dbReference type="UniPathway" id="UPA00602">
    <property type="reaction ID" value="UER00658"/>
</dbReference>
<dbReference type="Proteomes" id="UP000006371">
    <property type="component" value="Chromosome"/>
</dbReference>
<dbReference type="GO" id="GO:0005737">
    <property type="term" value="C:cytoplasm"/>
    <property type="evidence" value="ECO:0007669"/>
    <property type="project" value="UniProtKB-SubCell"/>
</dbReference>
<dbReference type="GO" id="GO:0000310">
    <property type="term" value="F:xanthine phosphoribosyltransferase activity"/>
    <property type="evidence" value="ECO:0007669"/>
    <property type="project" value="UniProtKB-UniRule"/>
</dbReference>
<dbReference type="GO" id="GO:0006166">
    <property type="term" value="P:purine ribonucleoside salvage"/>
    <property type="evidence" value="ECO:0007669"/>
    <property type="project" value="UniProtKB-KW"/>
</dbReference>
<dbReference type="GO" id="GO:0046110">
    <property type="term" value="P:xanthine metabolic process"/>
    <property type="evidence" value="ECO:0007669"/>
    <property type="project" value="InterPro"/>
</dbReference>
<dbReference type="GO" id="GO:0032265">
    <property type="term" value="P:XMP salvage"/>
    <property type="evidence" value="ECO:0007669"/>
    <property type="project" value="UniProtKB-UniRule"/>
</dbReference>
<dbReference type="CDD" id="cd06223">
    <property type="entry name" value="PRTases_typeI"/>
    <property type="match status" value="1"/>
</dbReference>
<dbReference type="Gene3D" id="3.40.50.2020">
    <property type="match status" value="1"/>
</dbReference>
<dbReference type="HAMAP" id="MF_01184">
    <property type="entry name" value="XPRTase"/>
    <property type="match status" value="1"/>
</dbReference>
<dbReference type="InterPro" id="IPR000836">
    <property type="entry name" value="PRibTrfase_dom"/>
</dbReference>
<dbReference type="InterPro" id="IPR029057">
    <property type="entry name" value="PRTase-like"/>
</dbReference>
<dbReference type="InterPro" id="IPR050118">
    <property type="entry name" value="Pur/Pyrimidine_PRTase"/>
</dbReference>
<dbReference type="InterPro" id="IPR010079">
    <property type="entry name" value="Xanthine_PRibTrfase"/>
</dbReference>
<dbReference type="NCBIfam" id="NF006671">
    <property type="entry name" value="PRK09219.1"/>
    <property type="match status" value="1"/>
</dbReference>
<dbReference type="NCBIfam" id="TIGR01744">
    <property type="entry name" value="XPRTase"/>
    <property type="match status" value="1"/>
</dbReference>
<dbReference type="PANTHER" id="PTHR43864">
    <property type="entry name" value="HYPOXANTHINE/GUANINE PHOSPHORIBOSYLTRANSFERASE"/>
    <property type="match status" value="1"/>
</dbReference>
<dbReference type="PANTHER" id="PTHR43864:SF1">
    <property type="entry name" value="XANTHINE PHOSPHORIBOSYLTRANSFERASE"/>
    <property type="match status" value="1"/>
</dbReference>
<dbReference type="Pfam" id="PF00156">
    <property type="entry name" value="Pribosyltran"/>
    <property type="match status" value="1"/>
</dbReference>
<dbReference type="SUPFAM" id="SSF53271">
    <property type="entry name" value="PRTase-like"/>
    <property type="match status" value="1"/>
</dbReference>
<accession>Q49UU6</accession>
<organism>
    <name type="scientific">Staphylococcus saprophyticus subsp. saprophyticus (strain ATCC 15305 / DSM 20229 / NCIMB 8711 / NCTC 7292 / S-41)</name>
    <dbReference type="NCBI Taxonomy" id="342451"/>
    <lineage>
        <taxon>Bacteria</taxon>
        <taxon>Bacillati</taxon>
        <taxon>Bacillota</taxon>
        <taxon>Bacilli</taxon>
        <taxon>Bacillales</taxon>
        <taxon>Staphylococcaceae</taxon>
        <taxon>Staphylococcus</taxon>
    </lineage>
</organism>
<sequence length="193" mass="20915">MDLLKQKVEADGVVIDEKILKVDGFLNHQIDARLMHDVGQTFYEQFKDEGITKILTIEASGIAPAIMAAMHFDVPCLFAKKAKPSTLKKGVYQAEIHSFTKNTTSTVVVSDEFLGENDRVLIIDDFLANGDASLGLNEIVKQAKATTVGIGIVVEKSFQPGRERLEEAGLTVSSLCKVASLSGNKVTFVGDEA</sequence>
<name>XPT_STAS1</name>
<feature type="chain" id="PRO_0000339758" description="Xanthine phosphoribosyltransferase">
    <location>
        <begin position="1"/>
        <end position="193"/>
    </location>
</feature>
<feature type="binding site" evidence="1">
    <location>
        <position position="20"/>
    </location>
    <ligand>
        <name>xanthine</name>
        <dbReference type="ChEBI" id="CHEBI:17712"/>
    </ligand>
</feature>
<feature type="binding site" evidence="1">
    <location>
        <position position="27"/>
    </location>
    <ligand>
        <name>xanthine</name>
        <dbReference type="ChEBI" id="CHEBI:17712"/>
    </ligand>
</feature>
<feature type="binding site" evidence="1">
    <location>
        <begin position="128"/>
        <end position="132"/>
    </location>
    <ligand>
        <name>5-phospho-alpha-D-ribose 1-diphosphate</name>
        <dbReference type="ChEBI" id="CHEBI:58017"/>
    </ligand>
</feature>
<feature type="binding site" evidence="1">
    <location>
        <position position="156"/>
    </location>
    <ligand>
        <name>xanthine</name>
        <dbReference type="ChEBI" id="CHEBI:17712"/>
    </ligand>
</feature>
<gene>
    <name evidence="1" type="primary">xpt</name>
    <name type="ordered locus">SSP2325</name>
</gene>
<evidence type="ECO:0000255" key="1">
    <source>
        <dbReference type="HAMAP-Rule" id="MF_01184"/>
    </source>
</evidence>
<keyword id="KW-0963">Cytoplasm</keyword>
<keyword id="KW-0328">Glycosyltransferase</keyword>
<keyword id="KW-0660">Purine salvage</keyword>
<keyword id="KW-1185">Reference proteome</keyword>
<keyword id="KW-0808">Transferase</keyword>